<accession>Q8JXB9</accession>
<comment type="function">
    <text evidence="4">The large envelope protein exists in two topological conformations, one which is termed 'external' or Le-HBsAg and the other 'internal' or Li-HBsAg. In its external conformation the protein attaches the virus to cell receptors and thereby initiating infection. This interaction determines the species specificity and liver tropism. This attachment induces virion internalization predominantly through caveolin-mediated endocytosis. The large envelope protein also assures fusion between virion membrane and endosomal membrane. In its internal conformation the protein plays a role in virion morphogenesis and mediates the contact with the nucleocapsid like a matrix protein.</text>
</comment>
<comment type="function">
    <text evidence="4">The middle envelope protein plays an important role in the budding of the virion. It is involved in the induction of budding in a nucleocapsid independent way. In this process the majority of envelope proteins bud to form subviral lipoprotein particles of 22 nm of diameter that do not contain a nucleocapsid.</text>
</comment>
<comment type="subunit">
    <text evidence="3">Interacts (via its myristoylated pre-S1 region) with the host SLC10A1/NTCP; this interaction is essential for viral entry.</text>
</comment>
<comment type="subunit">
    <molecule>Isoform L</molecule>
    <text evidence="2">In its internal form (Li-HBsAg), interacts with the capsid protein and with the isoform S. Interacts with host chaperone CANX.</text>
</comment>
<comment type="subunit">
    <molecule>Isoform M</molecule>
    <text evidence="2">Associates with host chaperone CANX through its pre-S2 N glycan; this association may be essential for isoform M proper secretion.</text>
</comment>
<comment type="subunit">
    <molecule>Isoform S</molecule>
    <text evidence="2">Interacts with isoform L. Interacts with the antigens of satellite virus HDV (HDVAgs); this interaction is required for encapsidation of HDV genomic RNA.</text>
</comment>
<comment type="subcellular location">
    <subcellularLocation>
        <location evidence="4">Virion membrane</location>
    </subcellularLocation>
</comment>
<comment type="alternative products">
    <event type="alternative splicing"/>
    <event type="alternative initiation"/>
    <isoform>
        <id>Q8JXB9-1</id>
        <name>L</name>
        <name>Large envelope protein</name>
        <name>LHB</name>
        <name>L-HBsAg</name>
        <sequence type="displayed"/>
    </isoform>
    <isoform>
        <id>Q8JXB9-2</id>
        <name>M</name>
        <name>Middle envelope protein</name>
        <name>MHB</name>
        <name>M-HBsAg</name>
        <sequence type="described" ref="VSP_031381"/>
    </isoform>
    <isoform>
        <id>Q8JXB9-3</id>
        <name>S</name>
        <name>Small envelope protein</name>
        <name>SHB</name>
        <name>S-HBsAg</name>
        <sequence type="described" ref="VSP_031380"/>
    </isoform>
</comment>
<comment type="domain">
    <text evidence="4">The large envelope protein is synthesized with the pre-S region at the cytosolic side of the endoplasmic reticulum and, hence will be within the virion after budding. Therefore the pre-S region is not N-glycosylated. Later a post-translational translocation of N-terminal pre-S and TM1 domains occur in about 50% of proteins at the virion surface. These molecules change their topology by an unknown mechanism, resulting in exposure of pre-S region at virion surface. For isoform M in contrast, the pre-S2 region is translocated cotranslationally to the endoplasmic reticulum lumen and is N-glycosylated.</text>
</comment>
<comment type="PTM">
    <text evidence="1 4">Isoform M is N-terminally acetylated by host at a ratio of 90%, and N-glycosylated by host at the pre-S2 region.</text>
</comment>
<comment type="PTM">
    <text evidence="3 4">Myristoylated; this modification is essential for its interaction with the host protein SLC10A1/NTCP.</text>
</comment>
<comment type="biotechnology">
    <text>Systematic vaccination of individuals at risk of exposure to the virus has been the main method of controlling the morbidity and mortality associated with hepatitis B. The first hepatitis B vaccine was manufactured by the purification and inactivation of HBsAg obtained from the plasma of chronic hepatitis B virus carriers. The vaccine is now produced by recombinant DNA techniques and expression of the S isoform in yeast cells. The pre-S region do not seem to induce strong enough antigenic response.</text>
</comment>
<comment type="similarity">
    <text evidence="4">Belongs to the orthohepadnavirus major surface antigen family.</text>
</comment>
<comment type="sequence caution" evidence="6">
    <conflict type="erroneous initiation">
        <sequence resource="EMBL-CDS" id="BAB96796"/>
    </conflict>
</comment>
<keyword id="KW-0007">Acetylation</keyword>
<keyword id="KW-0024">Alternative initiation</keyword>
<keyword id="KW-0025">Alternative splicing</keyword>
<keyword id="KW-1166">Caveolin-mediated endocytosis of virus by host</keyword>
<keyword id="KW-1170">Fusion of virus membrane with host endosomal membrane</keyword>
<keyword id="KW-1168">Fusion of virus membrane with host membrane</keyword>
<keyword id="KW-0325">Glycoprotein</keyword>
<keyword id="KW-0945">Host-virus interaction</keyword>
<keyword id="KW-0449">Lipoprotein</keyword>
<keyword id="KW-0472">Membrane</keyword>
<keyword id="KW-0519">Myristate</keyword>
<keyword id="KW-0812">Transmembrane</keyword>
<keyword id="KW-1133">Transmembrane helix</keyword>
<keyword id="KW-1161">Viral attachment to host cell</keyword>
<keyword id="KW-0261">Viral envelope protein</keyword>
<keyword id="KW-1162">Viral penetration into host cytoplasm</keyword>
<keyword id="KW-0946">Virion</keyword>
<keyword id="KW-1164">Virus endocytosis by host</keyword>
<keyword id="KW-1160">Virus entry into host cell</keyword>
<sequence length="400" mass="43625">MGGWSSKPRKGMGTNLSVPNPLGFFPDHQLDPAFKANSENPDWDLNPHKDNWPDAHKVGVGAFGPGFTPPHGGLLGWSPQAQGILTSVPAAPPPASTNRQSGRQPTPLSPPLRDTHPQAMQWNSTTFHQTLQDPRVRALYLPAGGSSSGTVSPAQNTVSAISSILSTTGDPVPNMENIASGLLGPLLVLQAGFFSLTKILTIPQSLDSWWTSLSFLGGTPVCLGQNSQSPISSHSPTCCPPICPGYRWMYLRRFIIXLCILLLCLIFLLVLLDYQGMLPVCPLIPGSSTTSTGPCKTCTTPAQGTSMFPSCCCTKPTDGNCTCIPIPSSWAFAKYLWEWASVRFSWLSLLVPFVQWFVGLSPTVWLSVIWMMWYWGPSLYNILSPFMPLLPIFFCLWVYI</sequence>
<organism>
    <name type="scientific">Hepatitis B virus genotype B1 (isolate Japan/Ry30/2002)</name>
    <name type="common">HBV-B</name>
    <dbReference type="NCBI Taxonomy" id="489465"/>
    <lineage>
        <taxon>Viruses</taxon>
        <taxon>Riboviria</taxon>
        <taxon>Pararnavirae</taxon>
        <taxon>Artverviricota</taxon>
        <taxon>Revtraviricetes</taxon>
        <taxon>Blubervirales</taxon>
        <taxon>Hepadnaviridae</taxon>
        <taxon>Orthohepadnavirus</taxon>
        <taxon>Hepatitis B virus</taxon>
    </lineage>
</organism>
<dbReference type="EMBL" id="AB073854">
    <property type="protein sequence ID" value="BAB96796.1"/>
    <property type="status" value="ALT_INIT"/>
    <property type="molecule type" value="Genomic_DNA"/>
</dbReference>
<dbReference type="PIR" id="JQ2059">
    <property type="entry name" value="JQ2059"/>
</dbReference>
<dbReference type="PIR" id="JQ2060">
    <property type="entry name" value="JQ2060"/>
</dbReference>
<dbReference type="PIR" id="JQ2062">
    <property type="entry name" value="JQ2062"/>
</dbReference>
<dbReference type="GlyCosmos" id="Q8JXB9">
    <property type="glycosylation" value="2 sites, No reported glycans"/>
</dbReference>
<dbReference type="Proteomes" id="UP000007919">
    <property type="component" value="Genome"/>
</dbReference>
<dbReference type="GO" id="GO:0016020">
    <property type="term" value="C:membrane"/>
    <property type="evidence" value="ECO:0007669"/>
    <property type="project" value="UniProtKB-UniRule"/>
</dbReference>
<dbReference type="GO" id="GO:0019031">
    <property type="term" value="C:viral envelope"/>
    <property type="evidence" value="ECO:0007669"/>
    <property type="project" value="UniProtKB-KW"/>
</dbReference>
<dbReference type="GO" id="GO:0055036">
    <property type="term" value="C:virion membrane"/>
    <property type="evidence" value="ECO:0007669"/>
    <property type="project" value="UniProtKB-SubCell"/>
</dbReference>
<dbReference type="GO" id="GO:0075513">
    <property type="term" value="P:caveolin-mediated endocytosis of virus by host cell"/>
    <property type="evidence" value="ECO:0007669"/>
    <property type="project" value="UniProtKB-KW"/>
</dbReference>
<dbReference type="GO" id="GO:0039654">
    <property type="term" value="P:fusion of virus membrane with host endosome membrane"/>
    <property type="evidence" value="ECO:0007669"/>
    <property type="project" value="UniProtKB-KW"/>
</dbReference>
<dbReference type="GO" id="GO:0019062">
    <property type="term" value="P:virion attachment to host cell"/>
    <property type="evidence" value="ECO:0007669"/>
    <property type="project" value="UniProtKB-UniRule"/>
</dbReference>
<dbReference type="HAMAP" id="MF_04075">
    <property type="entry name" value="HBV_HBSAG"/>
    <property type="match status" value="1"/>
</dbReference>
<dbReference type="InterPro" id="IPR000349">
    <property type="entry name" value="HBV_HBSAG"/>
</dbReference>
<dbReference type="Pfam" id="PF00695">
    <property type="entry name" value="vMSA"/>
    <property type="match status" value="1"/>
</dbReference>
<evidence type="ECO:0000250" key="1">
    <source>
        <dbReference type="UniProtKB" id="P03138"/>
    </source>
</evidence>
<evidence type="ECO:0000250" key="2">
    <source>
        <dbReference type="UniProtKB" id="P03141"/>
    </source>
</evidence>
<evidence type="ECO:0000250" key="3">
    <source>
        <dbReference type="UniProtKB" id="Q9PWW3"/>
    </source>
</evidence>
<evidence type="ECO:0000255" key="4">
    <source>
        <dbReference type="HAMAP-Rule" id="MF_04075"/>
    </source>
</evidence>
<evidence type="ECO:0000256" key="5">
    <source>
        <dbReference type="SAM" id="MobiDB-lite"/>
    </source>
</evidence>
<evidence type="ECO:0000305" key="6"/>
<protein>
    <recommendedName>
        <fullName evidence="4">Large envelope protein</fullName>
    </recommendedName>
    <alternativeName>
        <fullName evidence="4">L glycoprotein</fullName>
    </alternativeName>
    <alternativeName>
        <fullName evidence="4">L-HBsAg</fullName>
        <shortName evidence="4">LHB</shortName>
    </alternativeName>
    <alternativeName>
        <fullName evidence="4">Large S protein</fullName>
    </alternativeName>
    <alternativeName>
        <fullName evidence="4">Large surface protein</fullName>
    </alternativeName>
    <alternativeName>
        <fullName evidence="4">Major surface antigen</fullName>
    </alternativeName>
</protein>
<proteinExistence type="evidence at protein level"/>
<name>HBSAG_HBVB8</name>
<gene>
    <name evidence="4" type="primary">S</name>
</gene>
<reference key="1">
    <citation type="journal article" date="2002" name="J. Virol.">
        <title>Hepatitis B virus of genotype B with or without recombination with genotype C over the precore region plus the core gene.</title>
        <authorList>
            <person name="Sugauchi F."/>
            <person name="Orito E."/>
            <person name="Ichida T."/>
            <person name="Kato H."/>
            <person name="Sakugawa H."/>
            <person name="Kakumu S."/>
            <person name="Ishida T."/>
            <person name="Chutaputti A."/>
            <person name="Lai C.L."/>
            <person name="Ueda R."/>
            <person name="Miyakawa Y."/>
            <person name="Mizokami M."/>
        </authorList>
    </citation>
    <scope>NUCLEOTIDE SEQUENCE [GENOMIC DNA]</scope>
</reference>
<reference key="2">
    <citation type="journal article" date="1996" name="Intervirology">
        <title>Functions of the large hepatitis B virus surface protein in viral particle morphogenesis.</title>
        <authorList>
            <person name="Bruss V."/>
            <person name="Gerhardt E."/>
            <person name="Vieluf K."/>
            <person name="Wunderlich G."/>
        </authorList>
    </citation>
    <scope>REVIEW</scope>
</reference>
<reference key="3">
    <citation type="journal article" date="1998" name="Adv. Exp. Med. Biol.">
        <title>Role of glycan processing in hepatitis B virus envelope protein trafficking.</title>
        <authorList>
            <person name="Block T.M."/>
            <person name="Lu X."/>
            <person name="Mehta A."/>
            <person name="Park J."/>
            <person name="Blumberg B.S."/>
            <person name="Dwek R."/>
        </authorList>
    </citation>
    <scope>REVIEW</scope>
</reference>
<reference key="4">
    <citation type="journal article" date="2004" name="Virus Res.">
        <title>Envelopment of the hepatitis B virus nucleocapsid.</title>
        <authorList>
            <person name="Bruss V."/>
        </authorList>
    </citation>
    <scope>REVIEW</scope>
</reference>
<reference key="5">
    <citation type="journal article" date="2006" name="Cancer Sci.">
        <title>Hepatitis B virus pre-S mutants, endoplasmic reticulum stress and hepatocarcinogenesis.</title>
        <authorList>
            <person name="Wang H.C."/>
            <person name="Huang W."/>
            <person name="Lai M.D."/>
            <person name="Su I.J."/>
        </authorList>
    </citation>
    <scope>REVIEW</scope>
</reference>
<organismHost>
    <name type="scientific">Homo sapiens</name>
    <name type="common">Human</name>
    <dbReference type="NCBI Taxonomy" id="9606"/>
</organismHost>
<organismHost>
    <name type="scientific">Pan troglodytes</name>
    <name type="common">Chimpanzee</name>
    <dbReference type="NCBI Taxonomy" id="9598"/>
</organismHost>
<feature type="initiator methionine" description="Removed; by host" evidence="4">
    <location>
        <position position="1"/>
    </location>
</feature>
<feature type="chain" id="PRO_0000319079" description="Large envelope protein" evidence="4">
    <location>
        <begin position="2"/>
        <end position="400"/>
    </location>
</feature>
<feature type="topological domain" description="Intravirion; in internal conformation" evidence="4">
    <location>
        <begin position="2"/>
        <end position="253"/>
    </location>
</feature>
<feature type="topological domain" description="Virion surface; in external conformation" evidence="4">
    <location>
        <begin position="2"/>
        <end position="181"/>
    </location>
</feature>
<feature type="transmembrane region" description="Helical; Name=TM1; Note=In external conformation" evidence="4">
    <location>
        <begin position="182"/>
        <end position="202"/>
    </location>
</feature>
<feature type="topological domain" description="Intravirion; in external conformation" evidence="4">
    <location>
        <begin position="203"/>
        <end position="253"/>
    </location>
</feature>
<feature type="transmembrane region" description="Helical; Name=TM2" evidence="4">
    <location>
        <begin position="254"/>
        <end position="274"/>
    </location>
</feature>
<feature type="topological domain" description="Virion surface" evidence="4">
    <location>
        <begin position="275"/>
        <end position="348"/>
    </location>
</feature>
<feature type="transmembrane region" description="Helical" evidence="4">
    <location>
        <begin position="349"/>
        <end position="369"/>
    </location>
</feature>
<feature type="topological domain" description="Intravirion" evidence="4">
    <location>
        <begin position="370"/>
        <end position="375"/>
    </location>
</feature>
<feature type="transmembrane region" description="Helical; Name=TM3" evidence="4">
    <location>
        <begin position="376"/>
        <end position="398"/>
    </location>
</feature>
<feature type="topological domain" description="Virion surface" evidence="4">
    <location>
        <begin position="399"/>
        <end position="400"/>
    </location>
</feature>
<feature type="region of interest" description="Disordered" evidence="5">
    <location>
        <begin position="1"/>
        <end position="50"/>
    </location>
</feature>
<feature type="region of interest" description="Pre-S" evidence="4">
    <location>
        <begin position="2"/>
        <end position="174"/>
    </location>
</feature>
<feature type="region of interest" description="Pre-S1" evidence="4">
    <location>
        <begin position="2"/>
        <end position="119"/>
    </location>
</feature>
<feature type="region of interest" description="Disordered" evidence="5">
    <location>
        <begin position="84"/>
        <end position="116"/>
    </location>
</feature>
<feature type="region of interest" description="Pre-S2" evidence="4">
    <location>
        <begin position="120"/>
        <end position="174"/>
    </location>
</feature>
<feature type="compositionally biased region" description="Polar residues" evidence="5">
    <location>
        <begin position="96"/>
        <end position="106"/>
    </location>
</feature>
<feature type="lipid moiety-binding region" description="N-myristoyl glycine; by host" evidence="4">
    <location>
        <position position="2"/>
    </location>
</feature>
<feature type="glycosylation site" description="N-linked (GlcNAc...) asparagine; by host" evidence="4">
    <location>
        <position position="320"/>
    </location>
</feature>
<feature type="splice variant" id="VSP_031380" description="In isoform S." evidence="6">
    <location>
        <begin position="1"/>
        <end position="174"/>
    </location>
</feature>
<feature type="splice variant" id="VSP_031381" description="In isoform M." evidence="6">
    <location>
        <begin position="1"/>
        <end position="119"/>
    </location>
</feature>
<feature type="modified residue" description="N-acetylmethionine" evidence="6">
    <location sequence="Q8JXB9-2">
        <position position="1"/>
    </location>
</feature>
<feature type="glycosylation site" description="N-linked (GlcNAc...) asparagine" evidence="6">
    <location sequence="Q8JXB9-2">
        <position position="4"/>
    </location>
</feature>